<sequence length="230" mass="26184">MGRGKIEIKRIENSTNRQVTFCKRRNGLLKKAYELSVLCDAEVALIVFSTRGRLYEYANNNIRSTIERYKKACSDSTNTSTVQEINAAYYQQESAKLRQQIQTIQNSNRNLMGDSLSSLSVKELKQVENRLEKAISRIRSKKHELLLVEIENAQKREIELDNENIYLRTKVAEVERYQQHHHQMVSGSEINAIEALASRNYFAHSIMTAGSGSGNGGSYSDPDKKILHLG</sequence>
<name>AGL11_ARATH</name>
<organism>
    <name type="scientific">Arabidopsis thaliana</name>
    <name type="common">Mouse-ear cress</name>
    <dbReference type="NCBI Taxonomy" id="3702"/>
    <lineage>
        <taxon>Eukaryota</taxon>
        <taxon>Viridiplantae</taxon>
        <taxon>Streptophyta</taxon>
        <taxon>Embryophyta</taxon>
        <taxon>Tracheophyta</taxon>
        <taxon>Spermatophyta</taxon>
        <taxon>Magnoliopsida</taxon>
        <taxon>eudicotyledons</taxon>
        <taxon>Gunneridae</taxon>
        <taxon>Pentapetalae</taxon>
        <taxon>rosids</taxon>
        <taxon>malvids</taxon>
        <taxon>Brassicales</taxon>
        <taxon>Brassicaceae</taxon>
        <taxon>Camelineae</taxon>
        <taxon>Arabidopsis</taxon>
    </lineage>
</organism>
<gene>
    <name type="primary">AGL11</name>
    <name type="synonym">STK</name>
    <name type="ordered locus">At4g09960</name>
    <name type="ORF">T5L19.90</name>
</gene>
<proteinExistence type="evidence at protein level"/>
<dbReference type="EMBL" id="U20182">
    <property type="protein sequence ID" value="AAC49080.1"/>
    <property type="molecule type" value="mRNA"/>
</dbReference>
<dbReference type="EMBL" id="AL049481">
    <property type="protein sequence ID" value="CAB39620.1"/>
    <property type="molecule type" value="Genomic_DNA"/>
</dbReference>
<dbReference type="EMBL" id="AL161516">
    <property type="protein sequence ID" value="CAB78119.1"/>
    <property type="molecule type" value="Genomic_DNA"/>
</dbReference>
<dbReference type="EMBL" id="CP002687">
    <property type="protein sequence ID" value="AEE82816.1"/>
    <property type="molecule type" value="Genomic_DNA"/>
</dbReference>
<dbReference type="EMBL" id="CP002687">
    <property type="protein sequence ID" value="AEE82817.1"/>
    <property type="molecule type" value="Genomic_DNA"/>
</dbReference>
<dbReference type="EMBL" id="AY065289">
    <property type="protein sequence ID" value="AAL38765.1"/>
    <property type="molecule type" value="mRNA"/>
</dbReference>
<dbReference type="EMBL" id="AY133738">
    <property type="protein sequence ID" value="AAM91672.1"/>
    <property type="molecule type" value="mRNA"/>
</dbReference>
<dbReference type="EMBL" id="AY087201">
    <property type="protein sequence ID" value="AAM64757.1"/>
    <property type="molecule type" value="mRNA"/>
</dbReference>
<dbReference type="PIR" id="T04000">
    <property type="entry name" value="T04000"/>
</dbReference>
<dbReference type="RefSeq" id="NP_192734.1">
    <molecule id="Q38836-1"/>
    <property type="nucleotide sequence ID" value="NM_117064.7"/>
</dbReference>
<dbReference type="RefSeq" id="NP_849351.1">
    <molecule id="Q38836-2"/>
    <property type="nucleotide sequence ID" value="NM_179020.5"/>
</dbReference>
<dbReference type="SMR" id="Q38836"/>
<dbReference type="BioGRID" id="11885">
    <property type="interactions" value="10"/>
</dbReference>
<dbReference type="FunCoup" id="Q38836">
    <property type="interactions" value="31"/>
</dbReference>
<dbReference type="IntAct" id="Q38836">
    <property type="interactions" value="14"/>
</dbReference>
<dbReference type="STRING" id="3702.Q38836"/>
<dbReference type="GlyGen" id="Q38836">
    <property type="glycosylation" value="2 sites, 1 O-linked glycan (2 sites)"/>
</dbReference>
<dbReference type="PaxDb" id="3702-AT4G09960.3"/>
<dbReference type="EnsemblPlants" id="AT4G09960.1">
    <molecule id="Q38836-1"/>
    <property type="protein sequence ID" value="AT4G09960.1"/>
    <property type="gene ID" value="AT4G09960"/>
</dbReference>
<dbReference type="EnsemblPlants" id="AT4G09960.2">
    <molecule id="Q38836-2"/>
    <property type="protein sequence ID" value="AT4G09960.2"/>
    <property type="gene ID" value="AT4G09960"/>
</dbReference>
<dbReference type="GeneID" id="826586"/>
<dbReference type="Gramene" id="AT4G09960.1">
    <molecule id="Q38836-1"/>
    <property type="protein sequence ID" value="AT4G09960.1"/>
    <property type="gene ID" value="AT4G09960"/>
</dbReference>
<dbReference type="Gramene" id="AT4G09960.2">
    <molecule id="Q38836-2"/>
    <property type="protein sequence ID" value="AT4G09960.2"/>
    <property type="gene ID" value="AT4G09960"/>
</dbReference>
<dbReference type="KEGG" id="ath:AT4G09960"/>
<dbReference type="Araport" id="AT4G09960"/>
<dbReference type="TAIR" id="AT4G09960">
    <property type="gene designation" value="STK"/>
</dbReference>
<dbReference type="eggNOG" id="KOG0014">
    <property type="taxonomic scope" value="Eukaryota"/>
</dbReference>
<dbReference type="HOGENOM" id="CLU_053053_0_0_1"/>
<dbReference type="InParanoid" id="Q38836"/>
<dbReference type="PhylomeDB" id="Q38836"/>
<dbReference type="PRO" id="PR:Q38836"/>
<dbReference type="Proteomes" id="UP000006548">
    <property type="component" value="Chromosome 4"/>
</dbReference>
<dbReference type="ExpressionAtlas" id="Q38836">
    <property type="expression patterns" value="baseline and differential"/>
</dbReference>
<dbReference type="GO" id="GO:0005634">
    <property type="term" value="C:nucleus"/>
    <property type="evidence" value="ECO:0007669"/>
    <property type="project" value="UniProtKB-SubCell"/>
</dbReference>
<dbReference type="GO" id="GO:0003700">
    <property type="term" value="F:DNA-binding transcription factor activity"/>
    <property type="evidence" value="ECO:0007669"/>
    <property type="project" value="InterPro"/>
</dbReference>
<dbReference type="GO" id="GO:0046983">
    <property type="term" value="F:protein dimerization activity"/>
    <property type="evidence" value="ECO:0007669"/>
    <property type="project" value="InterPro"/>
</dbReference>
<dbReference type="GO" id="GO:0000977">
    <property type="term" value="F:RNA polymerase II transcription regulatory region sequence-specific DNA binding"/>
    <property type="evidence" value="ECO:0007669"/>
    <property type="project" value="InterPro"/>
</dbReference>
<dbReference type="GO" id="GO:0045944">
    <property type="term" value="P:positive regulation of transcription by RNA polymerase II"/>
    <property type="evidence" value="ECO:0007669"/>
    <property type="project" value="InterPro"/>
</dbReference>
<dbReference type="CDD" id="cd00265">
    <property type="entry name" value="MADS_MEF2_like"/>
    <property type="match status" value="1"/>
</dbReference>
<dbReference type="FunFam" id="3.40.1810.10:FF:000009">
    <property type="entry name" value="agamous-like MADS-box protein AGL11"/>
    <property type="match status" value="1"/>
</dbReference>
<dbReference type="Gene3D" id="3.40.1810.10">
    <property type="entry name" value="Transcription factor, MADS-box"/>
    <property type="match status" value="1"/>
</dbReference>
<dbReference type="InterPro" id="IPR050142">
    <property type="entry name" value="MADS-box/MEF2_TF"/>
</dbReference>
<dbReference type="InterPro" id="IPR033896">
    <property type="entry name" value="MEF2-like_N"/>
</dbReference>
<dbReference type="InterPro" id="IPR002487">
    <property type="entry name" value="TF_Kbox"/>
</dbReference>
<dbReference type="InterPro" id="IPR002100">
    <property type="entry name" value="TF_MADSbox"/>
</dbReference>
<dbReference type="InterPro" id="IPR036879">
    <property type="entry name" value="TF_MADSbox_sf"/>
</dbReference>
<dbReference type="PANTHER" id="PTHR48019">
    <property type="entry name" value="SERUM RESPONSE FACTOR HOMOLOG"/>
    <property type="match status" value="1"/>
</dbReference>
<dbReference type="Pfam" id="PF01486">
    <property type="entry name" value="K-box"/>
    <property type="match status" value="1"/>
</dbReference>
<dbReference type="Pfam" id="PF00319">
    <property type="entry name" value="SRF-TF"/>
    <property type="match status" value="1"/>
</dbReference>
<dbReference type="PRINTS" id="PR00404">
    <property type="entry name" value="MADSDOMAIN"/>
</dbReference>
<dbReference type="SMART" id="SM00432">
    <property type="entry name" value="MADS"/>
    <property type="match status" value="1"/>
</dbReference>
<dbReference type="SUPFAM" id="SSF55455">
    <property type="entry name" value="SRF-like"/>
    <property type="match status" value="1"/>
</dbReference>
<dbReference type="PROSITE" id="PS51297">
    <property type="entry name" value="K_BOX"/>
    <property type="match status" value="1"/>
</dbReference>
<dbReference type="PROSITE" id="PS00350">
    <property type="entry name" value="MADS_BOX_1"/>
    <property type="match status" value="1"/>
</dbReference>
<dbReference type="PROSITE" id="PS50066">
    <property type="entry name" value="MADS_BOX_2"/>
    <property type="match status" value="1"/>
</dbReference>
<keyword id="KW-0025">Alternative splicing</keyword>
<keyword id="KW-0217">Developmental protein</keyword>
<keyword id="KW-0238">DNA-binding</keyword>
<keyword id="KW-0539">Nucleus</keyword>
<keyword id="KW-1185">Reference proteome</keyword>
<keyword id="KW-0804">Transcription</keyword>
<keyword id="KW-0805">Transcription regulation</keyword>
<comment type="function">
    <text evidence="5 8">Probable transcription factor (Probable). Is required, together with TT16/AGL32 for the maternal control of endothelium formation, which is essential for female gametophyte development and fertilization, and seed formation (PubMed:22176531).</text>
</comment>
<comment type="subunit">
    <text evidence="4">Interacts with AGL15 and AGL16.</text>
</comment>
<comment type="interaction">
    <interactant intactId="EBI-592343">
        <id>Q38836</id>
    </interactant>
    <interactant intactId="EBI-592020">
        <id>O22456</id>
        <label>SEP3</label>
    </interactant>
    <organismsDiffer>false</organismsDiffer>
    <experiments>4</experiments>
</comment>
<comment type="subcellular location">
    <subcellularLocation>
        <location evidence="1">Nucleus</location>
    </subcellularLocation>
</comment>
<comment type="alternative products">
    <event type="alternative splicing"/>
    <isoform>
        <id>Q38836-1</id>
        <name>1</name>
        <sequence type="displayed"/>
    </isoform>
    <isoform>
        <id>Q38836-2</id>
        <name>2</name>
        <sequence type="described" ref="VSP_008892"/>
    </isoform>
</comment>
<comment type="miscellaneous">
    <molecule>Isoform 2</molecule>
    <text evidence="8">May be due to exon skipping.</text>
</comment>
<reference key="1">
    <citation type="journal article" date="1995" name="Plant Cell">
        <title>Diverse roles for MADS box genes in Arabidopsis development.</title>
        <authorList>
            <person name="Rounsley S.D."/>
            <person name="Ditta G.S."/>
            <person name="Yanofsky M.F."/>
        </authorList>
    </citation>
    <scope>NUCLEOTIDE SEQUENCE [MRNA] (ISOFORM 1)</scope>
    <source>
        <strain>cv. Landsberg erecta</strain>
        <tissue>Flower</tissue>
    </source>
</reference>
<reference key="2">
    <citation type="journal article" date="1999" name="Nature">
        <title>Sequence and analysis of chromosome 4 of the plant Arabidopsis thaliana.</title>
        <authorList>
            <person name="Mayer K.F.X."/>
            <person name="Schueller C."/>
            <person name="Wambutt R."/>
            <person name="Murphy G."/>
            <person name="Volckaert G."/>
            <person name="Pohl T."/>
            <person name="Duesterhoeft A."/>
            <person name="Stiekema W."/>
            <person name="Entian K.-D."/>
            <person name="Terryn N."/>
            <person name="Harris B."/>
            <person name="Ansorge W."/>
            <person name="Brandt P."/>
            <person name="Grivell L.A."/>
            <person name="Rieger M."/>
            <person name="Weichselgartner M."/>
            <person name="de Simone V."/>
            <person name="Obermaier B."/>
            <person name="Mache R."/>
            <person name="Mueller M."/>
            <person name="Kreis M."/>
            <person name="Delseny M."/>
            <person name="Puigdomenech P."/>
            <person name="Watson M."/>
            <person name="Schmidtheini T."/>
            <person name="Reichert B."/>
            <person name="Portetelle D."/>
            <person name="Perez-Alonso M."/>
            <person name="Boutry M."/>
            <person name="Bancroft I."/>
            <person name="Vos P."/>
            <person name="Hoheisel J."/>
            <person name="Zimmermann W."/>
            <person name="Wedler H."/>
            <person name="Ridley P."/>
            <person name="Langham S.-A."/>
            <person name="McCullagh B."/>
            <person name="Bilham L."/>
            <person name="Robben J."/>
            <person name="van der Schueren J."/>
            <person name="Grymonprez B."/>
            <person name="Chuang Y.-J."/>
            <person name="Vandenbussche F."/>
            <person name="Braeken M."/>
            <person name="Weltjens I."/>
            <person name="Voet M."/>
            <person name="Bastiaens I."/>
            <person name="Aert R."/>
            <person name="Defoor E."/>
            <person name="Weitzenegger T."/>
            <person name="Bothe G."/>
            <person name="Ramsperger U."/>
            <person name="Hilbert H."/>
            <person name="Braun M."/>
            <person name="Holzer E."/>
            <person name="Brandt A."/>
            <person name="Peters S."/>
            <person name="van Staveren M."/>
            <person name="Dirkse W."/>
            <person name="Mooijman P."/>
            <person name="Klein Lankhorst R."/>
            <person name="Rose M."/>
            <person name="Hauf J."/>
            <person name="Koetter P."/>
            <person name="Berneiser S."/>
            <person name="Hempel S."/>
            <person name="Feldpausch M."/>
            <person name="Lamberth S."/>
            <person name="Van den Daele H."/>
            <person name="De Keyser A."/>
            <person name="Buysshaert C."/>
            <person name="Gielen J."/>
            <person name="Villarroel R."/>
            <person name="De Clercq R."/>
            <person name="van Montagu M."/>
            <person name="Rogers J."/>
            <person name="Cronin A."/>
            <person name="Quail M.A."/>
            <person name="Bray-Allen S."/>
            <person name="Clark L."/>
            <person name="Doggett J."/>
            <person name="Hall S."/>
            <person name="Kay M."/>
            <person name="Lennard N."/>
            <person name="McLay K."/>
            <person name="Mayes R."/>
            <person name="Pettett A."/>
            <person name="Rajandream M.A."/>
            <person name="Lyne M."/>
            <person name="Benes V."/>
            <person name="Rechmann S."/>
            <person name="Borkova D."/>
            <person name="Bloecker H."/>
            <person name="Scharfe M."/>
            <person name="Grimm M."/>
            <person name="Loehnert T.-H."/>
            <person name="Dose S."/>
            <person name="de Haan M."/>
            <person name="Maarse A.C."/>
            <person name="Schaefer M."/>
            <person name="Mueller-Auer S."/>
            <person name="Gabel C."/>
            <person name="Fuchs M."/>
            <person name="Fartmann B."/>
            <person name="Granderath K."/>
            <person name="Dauner D."/>
            <person name="Herzl A."/>
            <person name="Neumann S."/>
            <person name="Argiriou A."/>
            <person name="Vitale D."/>
            <person name="Liguori R."/>
            <person name="Piravandi E."/>
            <person name="Massenet O."/>
            <person name="Quigley F."/>
            <person name="Clabauld G."/>
            <person name="Muendlein A."/>
            <person name="Felber R."/>
            <person name="Schnabl S."/>
            <person name="Hiller R."/>
            <person name="Schmidt W."/>
            <person name="Lecharny A."/>
            <person name="Aubourg S."/>
            <person name="Chefdor F."/>
            <person name="Cooke R."/>
            <person name="Berger C."/>
            <person name="Monfort A."/>
            <person name="Casacuberta E."/>
            <person name="Gibbons T."/>
            <person name="Weber N."/>
            <person name="Vandenbol M."/>
            <person name="Bargues M."/>
            <person name="Terol J."/>
            <person name="Torres A."/>
            <person name="Perez-Perez A."/>
            <person name="Purnelle B."/>
            <person name="Bent E."/>
            <person name="Johnson S."/>
            <person name="Tacon D."/>
            <person name="Jesse T."/>
            <person name="Heijnen L."/>
            <person name="Schwarz S."/>
            <person name="Scholler P."/>
            <person name="Heber S."/>
            <person name="Francs P."/>
            <person name="Bielke C."/>
            <person name="Frishman D."/>
            <person name="Haase D."/>
            <person name="Lemcke K."/>
            <person name="Mewes H.-W."/>
            <person name="Stocker S."/>
            <person name="Zaccaria P."/>
            <person name="Bevan M."/>
            <person name="Wilson R.K."/>
            <person name="de la Bastide M."/>
            <person name="Habermann K."/>
            <person name="Parnell L."/>
            <person name="Dedhia N."/>
            <person name="Gnoj L."/>
            <person name="Schutz K."/>
            <person name="Huang E."/>
            <person name="Spiegel L."/>
            <person name="Sekhon M."/>
            <person name="Murray J."/>
            <person name="Sheet P."/>
            <person name="Cordes M."/>
            <person name="Abu-Threideh J."/>
            <person name="Stoneking T."/>
            <person name="Kalicki J."/>
            <person name="Graves T."/>
            <person name="Harmon G."/>
            <person name="Edwards J."/>
            <person name="Latreille P."/>
            <person name="Courtney L."/>
            <person name="Cloud J."/>
            <person name="Abbott A."/>
            <person name="Scott K."/>
            <person name="Johnson D."/>
            <person name="Minx P."/>
            <person name="Bentley D."/>
            <person name="Fulton B."/>
            <person name="Miller N."/>
            <person name="Greco T."/>
            <person name="Kemp K."/>
            <person name="Kramer J."/>
            <person name="Fulton L."/>
            <person name="Mardis E."/>
            <person name="Dante M."/>
            <person name="Pepin K."/>
            <person name="Hillier L.W."/>
            <person name="Nelson J."/>
            <person name="Spieth J."/>
            <person name="Ryan E."/>
            <person name="Andrews S."/>
            <person name="Geisel C."/>
            <person name="Layman D."/>
            <person name="Du H."/>
            <person name="Ali J."/>
            <person name="Berghoff A."/>
            <person name="Jones K."/>
            <person name="Drone K."/>
            <person name="Cotton M."/>
            <person name="Joshu C."/>
            <person name="Antonoiu B."/>
            <person name="Zidanic M."/>
            <person name="Strong C."/>
            <person name="Sun H."/>
            <person name="Lamar B."/>
            <person name="Yordan C."/>
            <person name="Ma P."/>
            <person name="Zhong J."/>
            <person name="Preston R."/>
            <person name="Vil D."/>
            <person name="Shekher M."/>
            <person name="Matero A."/>
            <person name="Shah R."/>
            <person name="Swaby I.K."/>
            <person name="O'Shaughnessy A."/>
            <person name="Rodriguez M."/>
            <person name="Hoffman J."/>
            <person name="Till S."/>
            <person name="Granat S."/>
            <person name="Shohdy N."/>
            <person name="Hasegawa A."/>
            <person name="Hameed A."/>
            <person name="Lodhi M."/>
            <person name="Johnson A."/>
            <person name="Chen E."/>
            <person name="Marra M.A."/>
            <person name="Martienssen R."/>
            <person name="McCombie W.R."/>
        </authorList>
    </citation>
    <scope>NUCLEOTIDE SEQUENCE [LARGE SCALE GENOMIC DNA]</scope>
    <source>
        <strain>cv. Columbia</strain>
    </source>
</reference>
<reference key="3">
    <citation type="journal article" date="2017" name="Plant J.">
        <title>Araport11: a complete reannotation of the Arabidopsis thaliana reference genome.</title>
        <authorList>
            <person name="Cheng C.Y."/>
            <person name="Krishnakumar V."/>
            <person name="Chan A.P."/>
            <person name="Thibaud-Nissen F."/>
            <person name="Schobel S."/>
            <person name="Town C.D."/>
        </authorList>
    </citation>
    <scope>GENOME REANNOTATION</scope>
    <source>
        <strain>cv. Columbia</strain>
    </source>
</reference>
<reference key="4">
    <citation type="journal article" date="2003" name="Science">
        <title>Empirical analysis of transcriptional activity in the Arabidopsis genome.</title>
        <authorList>
            <person name="Yamada K."/>
            <person name="Lim J."/>
            <person name="Dale J.M."/>
            <person name="Chen H."/>
            <person name="Shinn P."/>
            <person name="Palm C.J."/>
            <person name="Southwick A.M."/>
            <person name="Wu H.C."/>
            <person name="Kim C.J."/>
            <person name="Nguyen M."/>
            <person name="Pham P.K."/>
            <person name="Cheuk R.F."/>
            <person name="Karlin-Newmann G."/>
            <person name="Liu S.X."/>
            <person name="Lam B."/>
            <person name="Sakano H."/>
            <person name="Wu T."/>
            <person name="Yu G."/>
            <person name="Miranda M."/>
            <person name="Quach H.L."/>
            <person name="Tripp M."/>
            <person name="Chang C.H."/>
            <person name="Lee J.M."/>
            <person name="Toriumi M.J."/>
            <person name="Chan M.M."/>
            <person name="Tang C.C."/>
            <person name="Onodera C.S."/>
            <person name="Deng J.M."/>
            <person name="Akiyama K."/>
            <person name="Ansari Y."/>
            <person name="Arakawa T."/>
            <person name="Banh J."/>
            <person name="Banno F."/>
            <person name="Bowser L."/>
            <person name="Brooks S.Y."/>
            <person name="Carninci P."/>
            <person name="Chao Q."/>
            <person name="Choy N."/>
            <person name="Enju A."/>
            <person name="Goldsmith A.D."/>
            <person name="Gurjal M."/>
            <person name="Hansen N.F."/>
            <person name="Hayashizaki Y."/>
            <person name="Johnson-Hopson C."/>
            <person name="Hsuan V.W."/>
            <person name="Iida K."/>
            <person name="Karnes M."/>
            <person name="Khan S."/>
            <person name="Koesema E."/>
            <person name="Ishida J."/>
            <person name="Jiang P.X."/>
            <person name="Jones T."/>
            <person name="Kawai J."/>
            <person name="Kamiya A."/>
            <person name="Meyers C."/>
            <person name="Nakajima M."/>
            <person name="Narusaka M."/>
            <person name="Seki M."/>
            <person name="Sakurai T."/>
            <person name="Satou M."/>
            <person name="Tamse R."/>
            <person name="Vaysberg M."/>
            <person name="Wallender E.K."/>
            <person name="Wong C."/>
            <person name="Yamamura Y."/>
            <person name="Yuan S."/>
            <person name="Shinozaki K."/>
            <person name="Davis R.W."/>
            <person name="Theologis A."/>
            <person name="Ecker J.R."/>
        </authorList>
    </citation>
    <scope>NUCLEOTIDE SEQUENCE [LARGE SCALE MRNA] (ISOFORM 2)</scope>
    <source>
        <strain>cv. Columbia</strain>
    </source>
</reference>
<reference key="5">
    <citation type="journal article" date="2005" name="Plant Cell">
        <title>Comprehensive interaction map of the Arabidopsis MADS Box transcription factors.</title>
        <authorList>
            <person name="de Folter S."/>
            <person name="Immink R.G.H."/>
            <person name="Kieffer M."/>
            <person name="Parenicova L."/>
            <person name="Henz S.R."/>
            <person name="Weigel D."/>
            <person name="Busscher M."/>
            <person name="Kooiker M."/>
            <person name="Colombo L."/>
            <person name="Kater M.M."/>
            <person name="Davies B."/>
            <person name="Angenent G.C."/>
        </authorList>
    </citation>
    <scope>INTERACTION WITH AGL15 AND AGL16</scope>
</reference>
<reference key="6">
    <citation type="submission" date="2002-03" db="EMBL/GenBank/DDBJ databases">
        <title>Full-length cDNA from Arabidopsis thaliana.</title>
        <authorList>
            <person name="Brover V.V."/>
            <person name="Troukhan M.E."/>
            <person name="Alexandrov N.A."/>
            <person name="Lu Y.-P."/>
            <person name="Flavell R.B."/>
            <person name="Feldmann K.A."/>
        </authorList>
    </citation>
    <scope>NUCLEOTIDE SEQUENCE [LARGE SCALE MRNA] (ISOFORM 2)</scope>
</reference>
<reference key="7">
    <citation type="journal article" date="2012" name="Plant J.">
        <title>The MADS box genes SEEDSTICK and ARABIDOPSIS Bsister play a maternal role in fertilization and seed development.</title>
        <authorList>
            <person name="Mizzotti C."/>
            <person name="Mendes M.A."/>
            <person name="Caporali E."/>
            <person name="Schnittger A."/>
            <person name="Kater M.M."/>
            <person name="Battaglia R."/>
            <person name="Colombo L."/>
        </authorList>
    </citation>
    <scope>FUNCTION</scope>
</reference>
<accession>Q38836</accession>
<accession>Q8VZ36</accession>
<protein>
    <recommendedName>
        <fullName>Agamous-like MADS-box protein AGL11</fullName>
    </recommendedName>
    <alternativeName>
        <fullName>Protein SEEDSTICK</fullName>
    </alternativeName>
</protein>
<feature type="chain" id="PRO_0000199470" description="Agamous-like MADS-box protein AGL11">
    <location>
        <begin position="1"/>
        <end position="230"/>
    </location>
</feature>
<feature type="domain" description="MADS-box" evidence="1">
    <location>
        <begin position="3"/>
        <end position="57"/>
    </location>
</feature>
<feature type="domain" description="K-box" evidence="2">
    <location>
        <begin position="87"/>
        <end position="177"/>
    </location>
</feature>
<feature type="region of interest" description="Disordered" evidence="3">
    <location>
        <begin position="211"/>
        <end position="230"/>
    </location>
</feature>
<feature type="compositionally biased region" description="Basic and acidic residues" evidence="3">
    <location>
        <begin position="221"/>
        <end position="230"/>
    </location>
</feature>
<feature type="splice variant" id="VSP_008892" description="In isoform 2." evidence="6 7">
    <location>
        <begin position="143"/>
        <end position="156"/>
    </location>
</feature>
<evidence type="ECO:0000255" key="1">
    <source>
        <dbReference type="PROSITE-ProRule" id="PRU00251"/>
    </source>
</evidence>
<evidence type="ECO:0000255" key="2">
    <source>
        <dbReference type="PROSITE-ProRule" id="PRU00629"/>
    </source>
</evidence>
<evidence type="ECO:0000256" key="3">
    <source>
        <dbReference type="SAM" id="MobiDB-lite"/>
    </source>
</evidence>
<evidence type="ECO:0000269" key="4">
    <source>
    </source>
</evidence>
<evidence type="ECO:0000269" key="5">
    <source>
    </source>
</evidence>
<evidence type="ECO:0000303" key="6">
    <source>
    </source>
</evidence>
<evidence type="ECO:0000303" key="7">
    <source ref="6"/>
</evidence>
<evidence type="ECO:0000305" key="8"/>